<organism>
    <name type="scientific">Bdellovibrio bacteriovorus (strain ATCC 15356 / DSM 50701 / NCIMB 9529 / HD100)</name>
    <dbReference type="NCBI Taxonomy" id="264462"/>
    <lineage>
        <taxon>Bacteria</taxon>
        <taxon>Pseudomonadati</taxon>
        <taxon>Bdellovibrionota</taxon>
        <taxon>Bdellovibrionia</taxon>
        <taxon>Bdellovibrionales</taxon>
        <taxon>Pseudobdellovibrionaceae</taxon>
        <taxon>Bdellovibrio</taxon>
    </lineage>
</organism>
<gene>
    <name evidence="1" type="primary">nusB</name>
    <name type="ordered locus">Bd1097</name>
</gene>
<reference key="1">
    <citation type="journal article" date="2004" name="Science">
        <title>A predator unmasked: life cycle of Bdellovibrio bacteriovorus from a genomic perspective.</title>
        <authorList>
            <person name="Rendulic S."/>
            <person name="Jagtap P."/>
            <person name="Rosinus A."/>
            <person name="Eppinger M."/>
            <person name="Baar C."/>
            <person name="Lanz C."/>
            <person name="Keller H."/>
            <person name="Lambert C."/>
            <person name="Evans K.J."/>
            <person name="Goesmann A."/>
            <person name="Meyer F."/>
            <person name="Sockett R.E."/>
            <person name="Schuster S.C."/>
        </authorList>
    </citation>
    <scope>NUCLEOTIDE SEQUENCE [LARGE SCALE GENOMIC DNA]</scope>
    <source>
        <strain>ATCC 15356 / DSM 50701 / NCIMB 9529 / HD100</strain>
    </source>
</reference>
<sequence>MKLTARRQARELALQVLFQTEFAPQISYQTFLEVFEQSLDPEVITYADLIVTGVKSNKEAIDSKIQASSAHWKVERMATIDRNILRIAVYEMRFAADPIKENIAINEAVEIAKKYGTSDSGSFVNGLLDQVGKAH</sequence>
<proteinExistence type="inferred from homology"/>
<comment type="function">
    <text evidence="1">Involved in transcription antitermination. Required for transcription of ribosomal RNA (rRNA) genes. Binds specifically to the boxA antiterminator sequence of the ribosomal RNA (rrn) operons.</text>
</comment>
<comment type="similarity">
    <text evidence="1">Belongs to the NusB family.</text>
</comment>
<feature type="chain" id="PRO_0000265489" description="Transcription antitermination protein NusB">
    <location>
        <begin position="1"/>
        <end position="135"/>
    </location>
</feature>
<protein>
    <recommendedName>
        <fullName evidence="1">Transcription antitermination protein NusB</fullName>
    </recommendedName>
    <alternativeName>
        <fullName evidence="1">Antitermination factor NusB</fullName>
    </alternativeName>
</protein>
<evidence type="ECO:0000255" key="1">
    <source>
        <dbReference type="HAMAP-Rule" id="MF_00073"/>
    </source>
</evidence>
<keyword id="KW-1185">Reference proteome</keyword>
<keyword id="KW-0694">RNA-binding</keyword>
<keyword id="KW-0804">Transcription</keyword>
<keyword id="KW-0889">Transcription antitermination</keyword>
<keyword id="KW-0805">Transcription regulation</keyword>
<dbReference type="EMBL" id="BX842648">
    <property type="protein sequence ID" value="CAE79020.1"/>
    <property type="molecule type" value="Genomic_DNA"/>
</dbReference>
<dbReference type="RefSeq" id="WP_011163622.1">
    <property type="nucleotide sequence ID" value="NC_005363.1"/>
</dbReference>
<dbReference type="SMR" id="Q6MNX9"/>
<dbReference type="STRING" id="264462.Bd1097"/>
<dbReference type="GeneID" id="93012150"/>
<dbReference type="KEGG" id="bba:Bd1097"/>
<dbReference type="eggNOG" id="COG0781">
    <property type="taxonomic scope" value="Bacteria"/>
</dbReference>
<dbReference type="HOGENOM" id="CLU_087843_3_3_7"/>
<dbReference type="Proteomes" id="UP000008080">
    <property type="component" value="Chromosome"/>
</dbReference>
<dbReference type="GO" id="GO:0005829">
    <property type="term" value="C:cytosol"/>
    <property type="evidence" value="ECO:0007669"/>
    <property type="project" value="TreeGrafter"/>
</dbReference>
<dbReference type="GO" id="GO:0003723">
    <property type="term" value="F:RNA binding"/>
    <property type="evidence" value="ECO:0007669"/>
    <property type="project" value="UniProtKB-UniRule"/>
</dbReference>
<dbReference type="GO" id="GO:0006353">
    <property type="term" value="P:DNA-templated transcription termination"/>
    <property type="evidence" value="ECO:0007669"/>
    <property type="project" value="UniProtKB-UniRule"/>
</dbReference>
<dbReference type="GO" id="GO:0031564">
    <property type="term" value="P:transcription antitermination"/>
    <property type="evidence" value="ECO:0007669"/>
    <property type="project" value="UniProtKB-KW"/>
</dbReference>
<dbReference type="CDD" id="cd00619">
    <property type="entry name" value="Terminator_NusB"/>
    <property type="match status" value="1"/>
</dbReference>
<dbReference type="Gene3D" id="1.10.940.10">
    <property type="entry name" value="NusB-like"/>
    <property type="match status" value="1"/>
</dbReference>
<dbReference type="HAMAP" id="MF_00073">
    <property type="entry name" value="NusB"/>
    <property type="match status" value="1"/>
</dbReference>
<dbReference type="InterPro" id="IPR035926">
    <property type="entry name" value="NusB-like_sf"/>
</dbReference>
<dbReference type="InterPro" id="IPR011605">
    <property type="entry name" value="NusB_fam"/>
</dbReference>
<dbReference type="InterPro" id="IPR006027">
    <property type="entry name" value="NusB_RsmB_TIM44"/>
</dbReference>
<dbReference type="NCBIfam" id="TIGR01951">
    <property type="entry name" value="nusB"/>
    <property type="match status" value="1"/>
</dbReference>
<dbReference type="PANTHER" id="PTHR11078:SF3">
    <property type="entry name" value="ANTITERMINATION NUSB DOMAIN-CONTAINING PROTEIN"/>
    <property type="match status" value="1"/>
</dbReference>
<dbReference type="PANTHER" id="PTHR11078">
    <property type="entry name" value="N UTILIZATION SUBSTANCE PROTEIN B-RELATED"/>
    <property type="match status" value="1"/>
</dbReference>
<dbReference type="Pfam" id="PF01029">
    <property type="entry name" value="NusB"/>
    <property type="match status" value="1"/>
</dbReference>
<dbReference type="SUPFAM" id="SSF48013">
    <property type="entry name" value="NusB-like"/>
    <property type="match status" value="1"/>
</dbReference>
<name>NUSB_BDEBA</name>
<accession>Q6MNX9</accession>